<keyword id="KW-0067">ATP-binding</keyword>
<keyword id="KW-0119">Carbohydrate metabolism</keyword>
<keyword id="KW-0320">Glycogen biosynthesis</keyword>
<keyword id="KW-0321">Glycogen metabolism</keyword>
<keyword id="KW-0547">Nucleotide-binding</keyword>
<keyword id="KW-0548">Nucleotidyltransferase</keyword>
<keyword id="KW-0808">Transferase</keyword>
<accession>Q030T6</accession>
<protein>
    <recommendedName>
        <fullName evidence="1">Glucose-1-phosphate adenylyltransferase</fullName>
        <ecNumber evidence="1">2.7.7.27</ecNumber>
    </recommendedName>
    <alternativeName>
        <fullName evidence="1">ADP-glucose pyrophosphorylase</fullName>
        <shortName evidence="1">ADPGlc PPase</shortName>
    </alternativeName>
    <alternativeName>
        <fullName evidence="1">ADP-glucose synthase</fullName>
    </alternativeName>
</protein>
<name>GLGC_LACLS</name>
<sequence>MAIEMLGLILAGGQGTRLGKLTKDVAKPAVPFGGRYRIIDFALSNCANSNVKNVGVITQYQPLTLNAHIGNGAPWGLNGINSGVTILQPYSSQEGSKWFEGTSHAVYQNISYIDQQNPEYVLILSGDHIYKMDYEAMLESHKEREASLTVSVMEVPLEEASRFGIMNTDDNDRIIEFEEKPKEPKSNLASMGIYIFNWKRLREVLVNGYSKGNPIEDFGGDVIPAYIEAGENVFAYRFKGYWKDVGTIDSLHQSSMEFLDLNNELNITDKSWRIYSHNDISAPQFITEKLKVKNALVGDGCYVDGTVIHSILSQNIHVQEGTTIEDSFIMSGTFIGENVTIKNAIIGENAKIGDNVEIIGEDEVAVIGHGEIKGENKNEQ</sequence>
<dbReference type="EC" id="2.7.7.27" evidence="1"/>
<dbReference type="EMBL" id="CP000425">
    <property type="protein sequence ID" value="ABJ72286.1"/>
    <property type="molecule type" value="Genomic_DNA"/>
</dbReference>
<dbReference type="RefSeq" id="WP_011675656.1">
    <property type="nucleotide sequence ID" value="NC_008527.1"/>
</dbReference>
<dbReference type="SMR" id="Q030T6"/>
<dbReference type="KEGG" id="llc:LACR_0724"/>
<dbReference type="HOGENOM" id="CLU_029499_14_0_9"/>
<dbReference type="UniPathway" id="UPA00164"/>
<dbReference type="Proteomes" id="UP000000240">
    <property type="component" value="Chromosome"/>
</dbReference>
<dbReference type="GO" id="GO:0005524">
    <property type="term" value="F:ATP binding"/>
    <property type="evidence" value="ECO:0007669"/>
    <property type="project" value="UniProtKB-KW"/>
</dbReference>
<dbReference type="GO" id="GO:0008878">
    <property type="term" value="F:glucose-1-phosphate adenylyltransferase activity"/>
    <property type="evidence" value="ECO:0007669"/>
    <property type="project" value="UniProtKB-UniRule"/>
</dbReference>
<dbReference type="GO" id="GO:0005978">
    <property type="term" value="P:glycogen biosynthetic process"/>
    <property type="evidence" value="ECO:0007669"/>
    <property type="project" value="UniProtKB-UniRule"/>
</dbReference>
<dbReference type="CDD" id="cd02508">
    <property type="entry name" value="ADP_Glucose_PP"/>
    <property type="match status" value="1"/>
</dbReference>
<dbReference type="CDD" id="cd04651">
    <property type="entry name" value="LbH_G1P_AT_C"/>
    <property type="match status" value="1"/>
</dbReference>
<dbReference type="Gene3D" id="2.160.10.10">
    <property type="entry name" value="Hexapeptide repeat proteins"/>
    <property type="match status" value="1"/>
</dbReference>
<dbReference type="Gene3D" id="3.90.550.10">
    <property type="entry name" value="Spore Coat Polysaccharide Biosynthesis Protein SpsA, Chain A"/>
    <property type="match status" value="1"/>
</dbReference>
<dbReference type="HAMAP" id="MF_00624">
    <property type="entry name" value="GlgC"/>
    <property type="match status" value="1"/>
</dbReference>
<dbReference type="InterPro" id="IPR011831">
    <property type="entry name" value="ADP-Glc_PPase"/>
</dbReference>
<dbReference type="InterPro" id="IPR005836">
    <property type="entry name" value="ADP_Glu_pyroP_CS"/>
</dbReference>
<dbReference type="InterPro" id="IPR023049">
    <property type="entry name" value="GlgC_bac"/>
</dbReference>
<dbReference type="InterPro" id="IPR056818">
    <property type="entry name" value="GlmU/GlgC-like_hexapep"/>
</dbReference>
<dbReference type="InterPro" id="IPR005835">
    <property type="entry name" value="NTP_transferase_dom"/>
</dbReference>
<dbReference type="InterPro" id="IPR029044">
    <property type="entry name" value="Nucleotide-diphossugar_trans"/>
</dbReference>
<dbReference type="InterPro" id="IPR011004">
    <property type="entry name" value="Trimer_LpxA-like_sf"/>
</dbReference>
<dbReference type="NCBIfam" id="TIGR02091">
    <property type="entry name" value="glgC"/>
    <property type="match status" value="1"/>
</dbReference>
<dbReference type="NCBIfam" id="NF003670">
    <property type="entry name" value="PRK05293.1"/>
    <property type="match status" value="1"/>
</dbReference>
<dbReference type="PANTHER" id="PTHR43523:SF2">
    <property type="entry name" value="GLUCOSE-1-PHOSPHATE ADENYLYLTRANSFERASE"/>
    <property type="match status" value="1"/>
</dbReference>
<dbReference type="PANTHER" id="PTHR43523">
    <property type="entry name" value="GLUCOSE-1-PHOSPHATE ADENYLYLTRANSFERASE-RELATED"/>
    <property type="match status" value="1"/>
</dbReference>
<dbReference type="Pfam" id="PF24894">
    <property type="entry name" value="Hexapep_GlmU"/>
    <property type="match status" value="1"/>
</dbReference>
<dbReference type="Pfam" id="PF00483">
    <property type="entry name" value="NTP_transferase"/>
    <property type="match status" value="1"/>
</dbReference>
<dbReference type="SUPFAM" id="SSF53448">
    <property type="entry name" value="Nucleotide-diphospho-sugar transferases"/>
    <property type="match status" value="1"/>
</dbReference>
<dbReference type="SUPFAM" id="SSF51161">
    <property type="entry name" value="Trimeric LpxA-like enzymes"/>
    <property type="match status" value="1"/>
</dbReference>
<dbReference type="PROSITE" id="PS00808">
    <property type="entry name" value="ADP_GLC_PYROPHOSPH_1"/>
    <property type="match status" value="1"/>
</dbReference>
<dbReference type="PROSITE" id="PS00809">
    <property type="entry name" value="ADP_GLC_PYROPHOSPH_2"/>
    <property type="match status" value="1"/>
</dbReference>
<dbReference type="PROSITE" id="PS00810">
    <property type="entry name" value="ADP_GLC_PYROPHOSPH_3"/>
    <property type="match status" value="1"/>
</dbReference>
<organism>
    <name type="scientific">Lactococcus lactis subsp. cremoris (strain SK11)</name>
    <dbReference type="NCBI Taxonomy" id="272622"/>
    <lineage>
        <taxon>Bacteria</taxon>
        <taxon>Bacillati</taxon>
        <taxon>Bacillota</taxon>
        <taxon>Bacilli</taxon>
        <taxon>Lactobacillales</taxon>
        <taxon>Streptococcaceae</taxon>
        <taxon>Lactococcus</taxon>
        <taxon>Lactococcus cremoris subsp. cremoris</taxon>
    </lineage>
</organism>
<feature type="chain" id="PRO_1000051573" description="Glucose-1-phosphate adenylyltransferase">
    <location>
        <begin position="1"/>
        <end position="380"/>
    </location>
</feature>
<feature type="binding site" evidence="1">
    <location>
        <position position="164"/>
    </location>
    <ligand>
        <name>alpha-D-glucose 1-phosphate</name>
        <dbReference type="ChEBI" id="CHEBI:58601"/>
    </ligand>
</feature>
<feature type="binding site" evidence="1">
    <location>
        <begin position="179"/>
        <end position="180"/>
    </location>
    <ligand>
        <name>alpha-D-glucose 1-phosphate</name>
        <dbReference type="ChEBI" id="CHEBI:58601"/>
    </ligand>
</feature>
<feature type="binding site" evidence="1">
    <location>
        <position position="190"/>
    </location>
    <ligand>
        <name>alpha-D-glucose 1-phosphate</name>
        <dbReference type="ChEBI" id="CHEBI:58601"/>
    </ligand>
</feature>
<comment type="function">
    <text evidence="1">Involved in the biosynthesis of ADP-glucose, a building block required for the elongation reactions to produce glycogen. Catalyzes the reaction between ATP and alpha-D-glucose 1-phosphate (G1P) to produce pyrophosphate and ADP-Glc.</text>
</comment>
<comment type="catalytic activity">
    <reaction evidence="1">
        <text>alpha-D-glucose 1-phosphate + ATP + H(+) = ADP-alpha-D-glucose + diphosphate</text>
        <dbReference type="Rhea" id="RHEA:12120"/>
        <dbReference type="ChEBI" id="CHEBI:15378"/>
        <dbReference type="ChEBI" id="CHEBI:30616"/>
        <dbReference type="ChEBI" id="CHEBI:33019"/>
        <dbReference type="ChEBI" id="CHEBI:57498"/>
        <dbReference type="ChEBI" id="CHEBI:58601"/>
        <dbReference type="EC" id="2.7.7.27"/>
    </reaction>
</comment>
<comment type="pathway">
    <text evidence="1">Glycan biosynthesis; glycogen biosynthesis.</text>
</comment>
<comment type="subunit">
    <text evidence="1">Homotetramer.</text>
</comment>
<comment type="similarity">
    <text evidence="1">Belongs to the bacterial/plant glucose-1-phosphate adenylyltransferase family.</text>
</comment>
<gene>
    <name evidence="1" type="primary">glgC</name>
    <name type="ordered locus">LACR_0724</name>
</gene>
<evidence type="ECO:0000255" key="1">
    <source>
        <dbReference type="HAMAP-Rule" id="MF_00624"/>
    </source>
</evidence>
<proteinExistence type="inferred from homology"/>
<reference key="1">
    <citation type="journal article" date="2006" name="Proc. Natl. Acad. Sci. U.S.A.">
        <title>Comparative genomics of the lactic acid bacteria.</title>
        <authorList>
            <person name="Makarova K.S."/>
            <person name="Slesarev A."/>
            <person name="Wolf Y.I."/>
            <person name="Sorokin A."/>
            <person name="Mirkin B."/>
            <person name="Koonin E.V."/>
            <person name="Pavlov A."/>
            <person name="Pavlova N."/>
            <person name="Karamychev V."/>
            <person name="Polouchine N."/>
            <person name="Shakhova V."/>
            <person name="Grigoriev I."/>
            <person name="Lou Y."/>
            <person name="Rohksar D."/>
            <person name="Lucas S."/>
            <person name="Huang K."/>
            <person name="Goodstein D.M."/>
            <person name="Hawkins T."/>
            <person name="Plengvidhya V."/>
            <person name="Welker D."/>
            <person name="Hughes J."/>
            <person name="Goh Y."/>
            <person name="Benson A."/>
            <person name="Baldwin K."/>
            <person name="Lee J.-H."/>
            <person name="Diaz-Muniz I."/>
            <person name="Dosti B."/>
            <person name="Smeianov V."/>
            <person name="Wechter W."/>
            <person name="Barabote R."/>
            <person name="Lorca G."/>
            <person name="Altermann E."/>
            <person name="Barrangou R."/>
            <person name="Ganesan B."/>
            <person name="Xie Y."/>
            <person name="Rawsthorne H."/>
            <person name="Tamir D."/>
            <person name="Parker C."/>
            <person name="Breidt F."/>
            <person name="Broadbent J.R."/>
            <person name="Hutkins R."/>
            <person name="O'Sullivan D."/>
            <person name="Steele J."/>
            <person name="Unlu G."/>
            <person name="Saier M.H. Jr."/>
            <person name="Klaenhammer T."/>
            <person name="Richardson P."/>
            <person name="Kozyavkin S."/>
            <person name="Weimer B.C."/>
            <person name="Mills D.A."/>
        </authorList>
    </citation>
    <scope>NUCLEOTIDE SEQUENCE [LARGE SCALE GENOMIC DNA]</scope>
    <source>
        <strain>SK11</strain>
    </source>
</reference>